<protein>
    <recommendedName>
        <fullName>Probable pyridoxal reductase 2</fullName>
        <shortName>PL reductase 2</shortName>
        <shortName>PL-red 2</shortName>
        <ecNumber>1.1.1.65</ecNumber>
    </recommendedName>
</protein>
<sequence>MPIVNGFKVGPIGLGLMGLTWRPKQTPIKQAFELMNYALSQGSNYWNAGEFYGINPPTANLDLLADYFEKYPKNADKVFLSVKGGTDFKTLAPHGDPESVTKSVKNALTRLRGKKKLDLFQCARVDHKVPIETTMKALKAFVDSGEISCVGLSEASAESIKRALAIVPIAAVETEYSLFSRDIEKNGILDTCTQLSIPIIAYAPFCHGLLTGRVKTAEDLKDFIKAFPFLRNMDKFNPKVFEKNIPFLKAVEQLAQKFGMSMPEFALNFIIANGKGMIIPIPGSTTVQRAESNLSALKKSLSSEQLEEAKKVLDKHQIFGLRYNKQLESTLSI</sequence>
<keyword id="KW-0963">Cytoplasm</keyword>
<keyword id="KW-0521">NADP</keyword>
<keyword id="KW-0560">Oxidoreductase</keyword>
<keyword id="KW-1185">Reference proteome</keyword>
<reference key="1">
    <citation type="journal article" date="2002" name="Nature">
        <title>The genome sequence of Schizosaccharomyces pombe.</title>
        <authorList>
            <person name="Wood V."/>
            <person name="Gwilliam R."/>
            <person name="Rajandream M.A."/>
            <person name="Lyne M.H."/>
            <person name="Lyne R."/>
            <person name="Stewart A."/>
            <person name="Sgouros J.G."/>
            <person name="Peat N."/>
            <person name="Hayles J."/>
            <person name="Baker S.G."/>
            <person name="Basham D."/>
            <person name="Bowman S."/>
            <person name="Brooks K."/>
            <person name="Brown D."/>
            <person name="Brown S."/>
            <person name="Chillingworth T."/>
            <person name="Churcher C.M."/>
            <person name="Collins M."/>
            <person name="Connor R."/>
            <person name="Cronin A."/>
            <person name="Davis P."/>
            <person name="Feltwell T."/>
            <person name="Fraser A."/>
            <person name="Gentles S."/>
            <person name="Goble A."/>
            <person name="Hamlin N."/>
            <person name="Harris D.E."/>
            <person name="Hidalgo J."/>
            <person name="Hodgson G."/>
            <person name="Holroyd S."/>
            <person name="Hornsby T."/>
            <person name="Howarth S."/>
            <person name="Huckle E.J."/>
            <person name="Hunt S."/>
            <person name="Jagels K."/>
            <person name="James K.D."/>
            <person name="Jones L."/>
            <person name="Jones M."/>
            <person name="Leather S."/>
            <person name="McDonald S."/>
            <person name="McLean J."/>
            <person name="Mooney P."/>
            <person name="Moule S."/>
            <person name="Mungall K.L."/>
            <person name="Murphy L.D."/>
            <person name="Niblett D."/>
            <person name="Odell C."/>
            <person name="Oliver K."/>
            <person name="O'Neil S."/>
            <person name="Pearson D."/>
            <person name="Quail M.A."/>
            <person name="Rabbinowitsch E."/>
            <person name="Rutherford K.M."/>
            <person name="Rutter S."/>
            <person name="Saunders D."/>
            <person name="Seeger K."/>
            <person name="Sharp S."/>
            <person name="Skelton J."/>
            <person name="Simmonds M.N."/>
            <person name="Squares R."/>
            <person name="Squares S."/>
            <person name="Stevens K."/>
            <person name="Taylor K."/>
            <person name="Taylor R.G."/>
            <person name="Tivey A."/>
            <person name="Walsh S.V."/>
            <person name="Warren T."/>
            <person name="Whitehead S."/>
            <person name="Woodward J.R."/>
            <person name="Volckaert G."/>
            <person name="Aert R."/>
            <person name="Robben J."/>
            <person name="Grymonprez B."/>
            <person name="Weltjens I."/>
            <person name="Vanstreels E."/>
            <person name="Rieger M."/>
            <person name="Schaefer M."/>
            <person name="Mueller-Auer S."/>
            <person name="Gabel C."/>
            <person name="Fuchs M."/>
            <person name="Duesterhoeft A."/>
            <person name="Fritzc C."/>
            <person name="Holzer E."/>
            <person name="Moestl D."/>
            <person name="Hilbert H."/>
            <person name="Borzym K."/>
            <person name="Langer I."/>
            <person name="Beck A."/>
            <person name="Lehrach H."/>
            <person name="Reinhardt R."/>
            <person name="Pohl T.M."/>
            <person name="Eger P."/>
            <person name="Zimmermann W."/>
            <person name="Wedler H."/>
            <person name="Wambutt R."/>
            <person name="Purnelle B."/>
            <person name="Goffeau A."/>
            <person name="Cadieu E."/>
            <person name="Dreano S."/>
            <person name="Gloux S."/>
            <person name="Lelaure V."/>
            <person name="Mottier S."/>
            <person name="Galibert F."/>
            <person name="Aves S.J."/>
            <person name="Xiang Z."/>
            <person name="Hunt C."/>
            <person name="Moore K."/>
            <person name="Hurst S.M."/>
            <person name="Lucas M."/>
            <person name="Rochet M."/>
            <person name="Gaillardin C."/>
            <person name="Tallada V.A."/>
            <person name="Garzon A."/>
            <person name="Thode G."/>
            <person name="Daga R.R."/>
            <person name="Cruzado L."/>
            <person name="Jimenez J."/>
            <person name="Sanchez M."/>
            <person name="del Rey F."/>
            <person name="Benito J."/>
            <person name="Dominguez A."/>
            <person name="Revuelta J.L."/>
            <person name="Moreno S."/>
            <person name="Armstrong J."/>
            <person name="Forsburg S.L."/>
            <person name="Cerutti L."/>
            <person name="Lowe T."/>
            <person name="McCombie W.R."/>
            <person name="Paulsen I."/>
            <person name="Potashkin J."/>
            <person name="Shpakovski G.V."/>
            <person name="Ussery D."/>
            <person name="Barrell B.G."/>
            <person name="Nurse P."/>
        </authorList>
    </citation>
    <scope>NUCLEOTIDE SEQUENCE [LARGE SCALE GENOMIC DNA]</scope>
    <source>
        <strain>972 / ATCC 24843</strain>
    </source>
</reference>
<reference key="2">
    <citation type="journal article" date="2006" name="Nat. Biotechnol.">
        <title>ORFeome cloning and global analysis of protein localization in the fission yeast Schizosaccharomyces pombe.</title>
        <authorList>
            <person name="Matsuyama A."/>
            <person name="Arai R."/>
            <person name="Yashiroda Y."/>
            <person name="Shirai A."/>
            <person name="Kamata A."/>
            <person name="Sekido S."/>
            <person name="Kobayashi Y."/>
            <person name="Hashimoto A."/>
            <person name="Hamamoto M."/>
            <person name="Hiraoka Y."/>
            <person name="Horinouchi S."/>
            <person name="Yoshida M."/>
        </authorList>
    </citation>
    <scope>SUBCELLULAR LOCATION [LARGE SCALE ANALYSIS]</scope>
</reference>
<accession>O94521</accession>
<evidence type="ECO:0000250" key="1"/>
<evidence type="ECO:0000269" key="2">
    <source>
    </source>
</evidence>
<evidence type="ECO:0000305" key="3"/>
<name>PLR2_SCHPO</name>
<comment type="function">
    <text evidence="1">Catalyzes the reduction of pyridoxal (PL) with NADPH and oxidation of pyridoxine (PN) with NADP(+).</text>
</comment>
<comment type="catalytic activity">
    <reaction>
        <text>pyridoxine + NADP(+) = pyridoxal + NADPH + H(+)</text>
        <dbReference type="Rhea" id="RHEA:16129"/>
        <dbReference type="ChEBI" id="CHEBI:15378"/>
        <dbReference type="ChEBI" id="CHEBI:16709"/>
        <dbReference type="ChEBI" id="CHEBI:17310"/>
        <dbReference type="ChEBI" id="CHEBI:57783"/>
        <dbReference type="ChEBI" id="CHEBI:58349"/>
        <dbReference type="EC" id="1.1.1.65"/>
    </reaction>
</comment>
<comment type="subcellular location">
    <subcellularLocation>
        <location evidence="2">Cytoplasm</location>
    </subcellularLocation>
</comment>
<comment type="similarity">
    <text evidence="3">Belongs to the aldo/keto reductase family.</text>
</comment>
<gene>
    <name type="ORF">SPCC1281.04</name>
</gene>
<dbReference type="EC" id="1.1.1.65"/>
<dbReference type="EMBL" id="CU329672">
    <property type="protein sequence ID" value="CAA22825.1"/>
    <property type="molecule type" value="Genomic_DNA"/>
</dbReference>
<dbReference type="PIR" id="T40923">
    <property type="entry name" value="T40923"/>
</dbReference>
<dbReference type="SMR" id="O94521"/>
<dbReference type="BioGRID" id="275736">
    <property type="interactions" value="17"/>
</dbReference>
<dbReference type="FunCoup" id="O94521">
    <property type="interactions" value="392"/>
</dbReference>
<dbReference type="STRING" id="284812.O94521"/>
<dbReference type="PaxDb" id="4896-SPCC1281.04.1"/>
<dbReference type="EnsemblFungi" id="SPCC1281.04.1">
    <property type="protein sequence ID" value="SPCC1281.04.1:pep"/>
    <property type="gene ID" value="SPCC1281.04"/>
</dbReference>
<dbReference type="KEGG" id="spo:2539165"/>
<dbReference type="PomBase" id="SPCC1281.04"/>
<dbReference type="VEuPathDB" id="FungiDB:SPCC1281.04"/>
<dbReference type="eggNOG" id="KOG1575">
    <property type="taxonomic scope" value="Eukaryota"/>
</dbReference>
<dbReference type="HOGENOM" id="CLU_023205_2_1_1"/>
<dbReference type="InParanoid" id="O94521"/>
<dbReference type="OMA" id="YPVEETI"/>
<dbReference type="PhylomeDB" id="O94521"/>
<dbReference type="PRO" id="PR:O94521"/>
<dbReference type="Proteomes" id="UP000002485">
    <property type="component" value="Chromosome III"/>
</dbReference>
<dbReference type="GO" id="GO:0005737">
    <property type="term" value="C:cytoplasm"/>
    <property type="evidence" value="ECO:0007005"/>
    <property type="project" value="PomBase"/>
</dbReference>
<dbReference type="GO" id="GO:0005634">
    <property type="term" value="C:nucleus"/>
    <property type="evidence" value="ECO:0000266"/>
    <property type="project" value="PomBase"/>
</dbReference>
<dbReference type="GO" id="GO:0004033">
    <property type="term" value="F:aldo-keto reductase (NADPH) activity"/>
    <property type="evidence" value="ECO:0000318"/>
    <property type="project" value="GO_Central"/>
</dbReference>
<dbReference type="GO" id="GO:0050236">
    <property type="term" value="F:pyridoxine:NADP 4-dehydrogenase activity"/>
    <property type="evidence" value="ECO:0000250"/>
    <property type="project" value="PomBase"/>
</dbReference>
<dbReference type="GO" id="GO:0042821">
    <property type="term" value="P:pyridoxal biosynthetic process"/>
    <property type="evidence" value="ECO:0000250"/>
    <property type="project" value="PomBase"/>
</dbReference>
<dbReference type="CDD" id="cd19077">
    <property type="entry name" value="AKR_AKR8A1-2"/>
    <property type="match status" value="1"/>
</dbReference>
<dbReference type="FunFam" id="3.20.20.100:FF:000051">
    <property type="entry name" value="Putative pyridoxal reductase (AKR8)"/>
    <property type="match status" value="1"/>
</dbReference>
<dbReference type="Gene3D" id="3.20.20.100">
    <property type="entry name" value="NADP-dependent oxidoreductase domain"/>
    <property type="match status" value="1"/>
</dbReference>
<dbReference type="InterPro" id="IPR050791">
    <property type="entry name" value="Aldo-Keto_reductase"/>
</dbReference>
<dbReference type="InterPro" id="IPR023210">
    <property type="entry name" value="NADP_OxRdtase_dom"/>
</dbReference>
<dbReference type="InterPro" id="IPR036812">
    <property type="entry name" value="NADP_OxRdtase_dom_sf"/>
</dbReference>
<dbReference type="PANTHER" id="PTHR43625">
    <property type="entry name" value="AFLATOXIN B1 ALDEHYDE REDUCTASE"/>
    <property type="match status" value="1"/>
</dbReference>
<dbReference type="PANTHER" id="PTHR43625:SF78">
    <property type="entry name" value="PYRIDOXAL REDUCTASE-RELATED"/>
    <property type="match status" value="1"/>
</dbReference>
<dbReference type="Pfam" id="PF00248">
    <property type="entry name" value="Aldo_ket_red"/>
    <property type="match status" value="1"/>
</dbReference>
<dbReference type="SUPFAM" id="SSF51430">
    <property type="entry name" value="NAD(P)-linked oxidoreductase"/>
    <property type="match status" value="1"/>
</dbReference>
<proteinExistence type="inferred from homology"/>
<feature type="chain" id="PRO_0000310315" description="Probable pyridoxal reductase 2">
    <location>
        <begin position="1"/>
        <end position="333"/>
    </location>
</feature>
<feature type="active site" description="Proton donor" evidence="1">
    <location>
        <position position="52"/>
    </location>
</feature>
<organism>
    <name type="scientific">Schizosaccharomyces pombe (strain 972 / ATCC 24843)</name>
    <name type="common">Fission yeast</name>
    <dbReference type="NCBI Taxonomy" id="284812"/>
    <lineage>
        <taxon>Eukaryota</taxon>
        <taxon>Fungi</taxon>
        <taxon>Dikarya</taxon>
        <taxon>Ascomycota</taxon>
        <taxon>Taphrinomycotina</taxon>
        <taxon>Schizosaccharomycetes</taxon>
        <taxon>Schizosaccharomycetales</taxon>
        <taxon>Schizosaccharomycetaceae</taxon>
        <taxon>Schizosaccharomyces</taxon>
    </lineage>
</organism>